<organism>
    <name type="scientific">Campylobacter lari (strain RM2100 / D67 / ATCC BAA-1060)</name>
    <dbReference type="NCBI Taxonomy" id="306263"/>
    <lineage>
        <taxon>Bacteria</taxon>
        <taxon>Pseudomonadati</taxon>
        <taxon>Campylobacterota</taxon>
        <taxon>Epsilonproteobacteria</taxon>
        <taxon>Campylobacterales</taxon>
        <taxon>Campylobacteraceae</taxon>
        <taxon>Campylobacter</taxon>
    </lineage>
</organism>
<protein>
    <recommendedName>
        <fullName evidence="1">tRNA/tmRNA (uracil-C(5))-methyltransferase</fullName>
        <ecNumber evidence="1">2.1.1.-</ecNumber>
        <ecNumber evidence="1">2.1.1.35</ecNumber>
    </recommendedName>
    <alternativeName>
        <fullName evidence="1">tRNA (uracil(54)-C(5))-methyltransferase</fullName>
    </alternativeName>
    <alternativeName>
        <fullName evidence="1">tRNA(m5U54)-methyltransferase</fullName>
        <shortName evidence="1">RUMT</shortName>
    </alternativeName>
    <alternativeName>
        <fullName evidence="1">tmRNA (uracil(341)-C(5))-methyltransferase</fullName>
    </alternativeName>
</protein>
<proteinExistence type="inferred from homology"/>
<keyword id="KW-0489">Methyltransferase</keyword>
<keyword id="KW-1185">Reference proteome</keyword>
<keyword id="KW-0949">S-adenosyl-L-methionine</keyword>
<keyword id="KW-0808">Transferase</keyword>
<keyword id="KW-0819">tRNA processing</keyword>
<accession>B9KCK3</accession>
<gene>
    <name evidence="1" type="primary">trmA</name>
    <name type="ordered locus">Cla_0969</name>
</gene>
<name>TRMA_CAMLR</name>
<comment type="function">
    <text evidence="1">Dual-specificity methyltransferase that catalyzes the formation of 5-methyluridine at position 54 (m5U54) in all tRNAs, and that of position 341 (m5U341) in tmRNA (transfer-mRNA).</text>
</comment>
<comment type="catalytic activity">
    <reaction evidence="1">
        <text>uridine(54) in tRNA + S-adenosyl-L-methionine = 5-methyluridine(54) in tRNA + S-adenosyl-L-homocysteine + H(+)</text>
        <dbReference type="Rhea" id="RHEA:42712"/>
        <dbReference type="Rhea" id="RHEA-COMP:10167"/>
        <dbReference type="Rhea" id="RHEA-COMP:10193"/>
        <dbReference type="ChEBI" id="CHEBI:15378"/>
        <dbReference type="ChEBI" id="CHEBI:57856"/>
        <dbReference type="ChEBI" id="CHEBI:59789"/>
        <dbReference type="ChEBI" id="CHEBI:65315"/>
        <dbReference type="ChEBI" id="CHEBI:74447"/>
        <dbReference type="EC" id="2.1.1.35"/>
    </reaction>
</comment>
<comment type="catalytic activity">
    <reaction evidence="1">
        <text>uridine(341) in tmRNA + S-adenosyl-L-methionine = 5-methyluridine(341) in tmRNA + S-adenosyl-L-homocysteine + H(+)</text>
        <dbReference type="Rhea" id="RHEA:43612"/>
        <dbReference type="Rhea" id="RHEA-COMP:10630"/>
        <dbReference type="Rhea" id="RHEA-COMP:10631"/>
        <dbReference type="ChEBI" id="CHEBI:15378"/>
        <dbReference type="ChEBI" id="CHEBI:57856"/>
        <dbReference type="ChEBI" id="CHEBI:59789"/>
        <dbReference type="ChEBI" id="CHEBI:65315"/>
        <dbReference type="ChEBI" id="CHEBI:74447"/>
    </reaction>
</comment>
<comment type="similarity">
    <text evidence="1">Belongs to the class I-like SAM-binding methyltransferase superfamily. RNA M5U methyltransferase family. TrmA subfamily.</text>
</comment>
<evidence type="ECO:0000255" key="1">
    <source>
        <dbReference type="HAMAP-Rule" id="MF_01011"/>
    </source>
</evidence>
<sequence>MHFEEKIALNKALFSSLYDKEIQCFKSPLKAYRTRAEFCIYHHENGEISYAMYENKKKIPIKNFEIADEKIQAYMPILLDNLNENLKHKLFGVEFLATKIDLSITLLYHKNIESITQDLQELSKKLNLKLIARSRGKKLVFNGENLKQILNIKNKEIFYEFNNDCFIQPNTTINEKMIEWVIDLLEKEERKDLLELYCGYGNFTIALAKYFNKILATEISKKNIEFALKNCDLNSIKNISFTRLSSEELSQALKKEREFNRLKGIDLDGFNISHVLVDPPRAGLDVSVIELIKKYENIIYISCNPITLRENLEILSQSHEILNLAFFDQFANTSHLECGVHLRLKA</sequence>
<reference key="1">
    <citation type="journal article" date="2008" name="Foodborne Pathog. Dis.">
        <title>The complete genome sequence and analysis of the human pathogen Campylobacter lari.</title>
        <authorList>
            <person name="Miller W.G."/>
            <person name="Wang G."/>
            <person name="Binnewies T.T."/>
            <person name="Parker C.T."/>
        </authorList>
    </citation>
    <scope>NUCLEOTIDE SEQUENCE [LARGE SCALE GENOMIC DNA]</scope>
    <source>
        <strain>RM2100 / D67 / ATCC BAA-1060</strain>
    </source>
</reference>
<feature type="chain" id="PRO_0000388550" description="tRNA/tmRNA (uracil-C(5))-methyltransferase">
    <location>
        <begin position="1"/>
        <end position="346"/>
    </location>
</feature>
<feature type="active site" description="Nucleophile" evidence="1">
    <location>
        <position position="303"/>
    </location>
</feature>
<feature type="active site" description="Proton acceptor" evidence="1">
    <location>
        <position position="337"/>
    </location>
</feature>
<feature type="binding site" evidence="1">
    <location>
        <position position="168"/>
    </location>
    <ligand>
        <name>S-adenosyl-L-methionine</name>
        <dbReference type="ChEBI" id="CHEBI:59789"/>
    </ligand>
</feature>
<feature type="binding site" evidence="1">
    <location>
        <position position="197"/>
    </location>
    <ligand>
        <name>S-adenosyl-L-methionine</name>
        <dbReference type="ChEBI" id="CHEBI:59789"/>
    </ligand>
</feature>
<feature type="binding site" evidence="1">
    <location>
        <position position="202"/>
    </location>
    <ligand>
        <name>S-adenosyl-L-methionine</name>
        <dbReference type="ChEBI" id="CHEBI:59789"/>
    </ligand>
</feature>
<feature type="binding site" evidence="1">
    <location>
        <position position="218"/>
    </location>
    <ligand>
        <name>S-adenosyl-L-methionine</name>
        <dbReference type="ChEBI" id="CHEBI:59789"/>
    </ligand>
</feature>
<feature type="binding site" evidence="1">
    <location>
        <position position="278"/>
    </location>
    <ligand>
        <name>S-adenosyl-L-methionine</name>
        <dbReference type="ChEBI" id="CHEBI:59789"/>
    </ligand>
</feature>
<dbReference type="EC" id="2.1.1.-" evidence="1"/>
<dbReference type="EC" id="2.1.1.35" evidence="1"/>
<dbReference type="EMBL" id="CP000932">
    <property type="protein sequence ID" value="ACM64292.1"/>
    <property type="molecule type" value="Genomic_DNA"/>
</dbReference>
<dbReference type="RefSeq" id="WP_012661675.1">
    <property type="nucleotide sequence ID" value="NC_012039.1"/>
</dbReference>
<dbReference type="SMR" id="B9KCK3"/>
<dbReference type="STRING" id="306263.Cla_0969"/>
<dbReference type="KEGG" id="cla:CLA_0969"/>
<dbReference type="PATRIC" id="fig|306263.5.peg.953"/>
<dbReference type="eggNOG" id="COG2265">
    <property type="taxonomic scope" value="Bacteria"/>
</dbReference>
<dbReference type="HOGENOM" id="CLU_043022_1_0_7"/>
<dbReference type="Proteomes" id="UP000007727">
    <property type="component" value="Chromosome"/>
</dbReference>
<dbReference type="GO" id="GO:0005829">
    <property type="term" value="C:cytosol"/>
    <property type="evidence" value="ECO:0007669"/>
    <property type="project" value="TreeGrafter"/>
</dbReference>
<dbReference type="GO" id="GO:0019843">
    <property type="term" value="F:rRNA binding"/>
    <property type="evidence" value="ECO:0007669"/>
    <property type="project" value="TreeGrafter"/>
</dbReference>
<dbReference type="GO" id="GO:0030697">
    <property type="term" value="F:tRNA (uracil(54)-C5)-methyltransferase activity, S-adenosyl methionine-dependent"/>
    <property type="evidence" value="ECO:0007669"/>
    <property type="project" value="UniProtKB-EC"/>
</dbReference>
<dbReference type="GO" id="GO:0000049">
    <property type="term" value="F:tRNA binding"/>
    <property type="evidence" value="ECO:0007669"/>
    <property type="project" value="TreeGrafter"/>
</dbReference>
<dbReference type="GO" id="GO:0032259">
    <property type="term" value="P:methylation"/>
    <property type="evidence" value="ECO:0007669"/>
    <property type="project" value="UniProtKB-KW"/>
</dbReference>
<dbReference type="GO" id="GO:0008033">
    <property type="term" value="P:tRNA processing"/>
    <property type="evidence" value="ECO:0007669"/>
    <property type="project" value="UniProtKB-KW"/>
</dbReference>
<dbReference type="CDD" id="cd02440">
    <property type="entry name" value="AdoMet_MTases"/>
    <property type="match status" value="1"/>
</dbReference>
<dbReference type="FunFam" id="3.40.50.150:FF:000012">
    <property type="entry name" value="tRNA/tmRNA (uracil-C(5))-methyltransferase"/>
    <property type="match status" value="1"/>
</dbReference>
<dbReference type="Gene3D" id="2.40.50.1070">
    <property type="match status" value="1"/>
</dbReference>
<dbReference type="Gene3D" id="3.40.50.150">
    <property type="entry name" value="Vaccinia Virus protein VP39"/>
    <property type="match status" value="1"/>
</dbReference>
<dbReference type="HAMAP" id="MF_01011">
    <property type="entry name" value="RNA_methyltr_TrmA"/>
    <property type="match status" value="1"/>
</dbReference>
<dbReference type="InterPro" id="IPR030390">
    <property type="entry name" value="MeTrfase_TrmA_AS"/>
</dbReference>
<dbReference type="InterPro" id="IPR029063">
    <property type="entry name" value="SAM-dependent_MTases_sf"/>
</dbReference>
<dbReference type="InterPro" id="IPR011869">
    <property type="entry name" value="TrmA_MeTrfase"/>
</dbReference>
<dbReference type="InterPro" id="IPR010280">
    <property type="entry name" value="U5_MeTrfase_fam"/>
</dbReference>
<dbReference type="NCBIfam" id="TIGR02143">
    <property type="entry name" value="trmA_only"/>
    <property type="match status" value="1"/>
</dbReference>
<dbReference type="PANTHER" id="PTHR47790">
    <property type="entry name" value="TRNA/TMRNA (URACIL-C(5))-METHYLTRANSFERASE"/>
    <property type="match status" value="1"/>
</dbReference>
<dbReference type="PANTHER" id="PTHR47790:SF2">
    <property type="entry name" value="TRNA_TMRNA (URACIL-C(5))-METHYLTRANSFERASE"/>
    <property type="match status" value="1"/>
</dbReference>
<dbReference type="Pfam" id="PF05958">
    <property type="entry name" value="tRNA_U5-meth_tr"/>
    <property type="match status" value="1"/>
</dbReference>
<dbReference type="SUPFAM" id="SSF53335">
    <property type="entry name" value="S-adenosyl-L-methionine-dependent methyltransferases"/>
    <property type="match status" value="1"/>
</dbReference>
<dbReference type="PROSITE" id="PS51687">
    <property type="entry name" value="SAM_MT_RNA_M5U"/>
    <property type="match status" value="1"/>
</dbReference>
<dbReference type="PROSITE" id="PS01230">
    <property type="entry name" value="TRMA_1"/>
    <property type="match status" value="1"/>
</dbReference>